<keyword id="KW-0067">ATP-binding</keyword>
<keyword id="KW-0963">Cytoplasm</keyword>
<keyword id="KW-0227">DNA damage</keyword>
<keyword id="KW-0233">DNA recombination</keyword>
<keyword id="KW-0234">DNA repair</keyword>
<keyword id="KW-0238">DNA-binding</keyword>
<keyword id="KW-0547">Nucleotide-binding</keyword>
<keyword id="KW-0742">SOS response</keyword>
<protein>
    <recommendedName>
        <fullName evidence="1">Protein RecA</fullName>
    </recommendedName>
    <alternativeName>
        <fullName evidence="1">Recombinase A</fullName>
    </alternativeName>
</protein>
<comment type="function">
    <text evidence="1">Can catalyze the hydrolysis of ATP in the presence of single-stranded DNA, the ATP-dependent uptake of single-stranded DNA by duplex DNA, and the ATP-dependent hybridization of homologous single-stranded DNAs. It interacts with LexA causing its activation and leading to its autocatalytic cleavage.</text>
</comment>
<comment type="subcellular location">
    <subcellularLocation>
        <location evidence="1">Cytoplasm</location>
    </subcellularLocation>
</comment>
<comment type="similarity">
    <text evidence="1">Belongs to the RecA family.</text>
</comment>
<dbReference type="EMBL" id="U57904">
    <property type="protein sequence ID" value="AAB49198.1"/>
    <property type="molecule type" value="Genomic_DNA"/>
</dbReference>
<dbReference type="EMBL" id="Y11817">
    <property type="protein sequence ID" value="CAA72502.1"/>
    <property type="molecule type" value="Genomic_DNA"/>
</dbReference>
<dbReference type="EMBL" id="Y11814">
    <property type="protein sequence ID" value="CAA72499.1"/>
    <property type="molecule type" value="Genomic_DNA"/>
</dbReference>
<dbReference type="EMBL" id="Y11815">
    <property type="protein sequence ID" value="CAA72500.1"/>
    <property type="molecule type" value="Genomic_DNA"/>
</dbReference>
<dbReference type="EMBL" id="Y11816">
    <property type="protein sequence ID" value="CAA72501.1"/>
    <property type="molecule type" value="Genomic_DNA"/>
</dbReference>
<dbReference type="SMR" id="P96955"/>
<dbReference type="GO" id="GO:0005829">
    <property type="term" value="C:cytosol"/>
    <property type="evidence" value="ECO:0007669"/>
    <property type="project" value="TreeGrafter"/>
</dbReference>
<dbReference type="GO" id="GO:0005524">
    <property type="term" value="F:ATP binding"/>
    <property type="evidence" value="ECO:0007669"/>
    <property type="project" value="UniProtKB-KW"/>
</dbReference>
<dbReference type="GO" id="GO:0016887">
    <property type="term" value="F:ATP hydrolysis activity"/>
    <property type="evidence" value="ECO:0007669"/>
    <property type="project" value="InterPro"/>
</dbReference>
<dbReference type="GO" id="GO:0140664">
    <property type="term" value="F:ATP-dependent DNA damage sensor activity"/>
    <property type="evidence" value="ECO:0007669"/>
    <property type="project" value="InterPro"/>
</dbReference>
<dbReference type="GO" id="GO:0003697">
    <property type="term" value="F:single-stranded DNA binding"/>
    <property type="evidence" value="ECO:0007669"/>
    <property type="project" value="InterPro"/>
</dbReference>
<dbReference type="GO" id="GO:0006310">
    <property type="term" value="P:DNA recombination"/>
    <property type="evidence" value="ECO:0007669"/>
    <property type="project" value="UniProtKB-KW"/>
</dbReference>
<dbReference type="GO" id="GO:0006281">
    <property type="term" value="P:DNA repair"/>
    <property type="evidence" value="ECO:0007669"/>
    <property type="project" value="UniProtKB-KW"/>
</dbReference>
<dbReference type="GO" id="GO:0009432">
    <property type="term" value="P:SOS response"/>
    <property type="evidence" value="ECO:0007669"/>
    <property type="project" value="UniProtKB-KW"/>
</dbReference>
<dbReference type="CDD" id="cd00983">
    <property type="entry name" value="RecA"/>
    <property type="match status" value="1"/>
</dbReference>
<dbReference type="FunFam" id="3.40.50.300:FF:000087">
    <property type="entry name" value="Recombinase RecA"/>
    <property type="match status" value="1"/>
</dbReference>
<dbReference type="Gene3D" id="3.40.50.300">
    <property type="entry name" value="P-loop containing nucleotide triphosphate hydrolases"/>
    <property type="match status" value="1"/>
</dbReference>
<dbReference type="HAMAP" id="MF_00268">
    <property type="entry name" value="RecA"/>
    <property type="match status" value="1"/>
</dbReference>
<dbReference type="InterPro" id="IPR003593">
    <property type="entry name" value="AAA+_ATPase"/>
</dbReference>
<dbReference type="InterPro" id="IPR013765">
    <property type="entry name" value="DNA_recomb/repair_RecA"/>
</dbReference>
<dbReference type="InterPro" id="IPR020584">
    <property type="entry name" value="DNA_recomb/repair_RecA_CS"/>
</dbReference>
<dbReference type="InterPro" id="IPR027417">
    <property type="entry name" value="P-loop_NTPase"/>
</dbReference>
<dbReference type="InterPro" id="IPR049261">
    <property type="entry name" value="RecA-like_C"/>
</dbReference>
<dbReference type="InterPro" id="IPR049428">
    <property type="entry name" value="RecA-like_N"/>
</dbReference>
<dbReference type="InterPro" id="IPR020588">
    <property type="entry name" value="RecA_ATP-bd"/>
</dbReference>
<dbReference type="InterPro" id="IPR023400">
    <property type="entry name" value="RecA_C_sf"/>
</dbReference>
<dbReference type="InterPro" id="IPR020587">
    <property type="entry name" value="RecA_monomer-monomer_interface"/>
</dbReference>
<dbReference type="NCBIfam" id="TIGR02012">
    <property type="entry name" value="tigrfam_recA"/>
    <property type="match status" value="1"/>
</dbReference>
<dbReference type="PANTHER" id="PTHR45900:SF1">
    <property type="entry name" value="MITOCHONDRIAL DNA REPAIR PROTEIN RECA HOMOLOG-RELATED"/>
    <property type="match status" value="1"/>
</dbReference>
<dbReference type="PANTHER" id="PTHR45900">
    <property type="entry name" value="RECA"/>
    <property type="match status" value="1"/>
</dbReference>
<dbReference type="Pfam" id="PF00154">
    <property type="entry name" value="RecA"/>
    <property type="match status" value="1"/>
</dbReference>
<dbReference type="Pfam" id="PF21096">
    <property type="entry name" value="RecA_C"/>
    <property type="match status" value="1"/>
</dbReference>
<dbReference type="PRINTS" id="PR00142">
    <property type="entry name" value="RECA"/>
</dbReference>
<dbReference type="SMART" id="SM00382">
    <property type="entry name" value="AAA"/>
    <property type="match status" value="1"/>
</dbReference>
<dbReference type="SUPFAM" id="SSF52540">
    <property type="entry name" value="P-loop containing nucleoside triphosphate hydrolases"/>
    <property type="match status" value="1"/>
</dbReference>
<dbReference type="SUPFAM" id="SSF54752">
    <property type="entry name" value="RecA protein, C-terminal domain"/>
    <property type="match status" value="1"/>
</dbReference>
<dbReference type="PROSITE" id="PS00321">
    <property type="entry name" value="RECA_1"/>
    <property type="match status" value="1"/>
</dbReference>
<dbReference type="PROSITE" id="PS50162">
    <property type="entry name" value="RECA_2"/>
    <property type="match status" value="1"/>
</dbReference>
<dbReference type="PROSITE" id="PS50163">
    <property type="entry name" value="RECA_3"/>
    <property type="match status" value="1"/>
</dbReference>
<proteinExistence type="inferred from homology"/>
<reference key="1">
    <citation type="journal article" date="1996" name="J. Mol. Evol.">
        <title>A comparison of the nucleotide sequences of the adk and recA genes of pathogenic and commensal Neisseria species: evidence for extensive interspecies recombination within adk.</title>
        <authorList>
            <person name="Feil E."/>
            <person name="Zhou J."/>
            <person name="Maynard Smith J."/>
            <person name="Spratt B.G."/>
        </authorList>
    </citation>
    <scope>NUCLEOTIDE SEQUENCE [GENOMIC DNA]</scope>
    <source>
        <strain>ATCC 43768 / DSM 22809 / CCUG 18030 / CIP 100113 / NCTC 11858 / LNP N 462</strain>
    </source>
</reference>
<reference key="2">
    <citation type="submission" date="1997-03" db="EMBL/GenBank/DDBJ databases">
        <authorList>
            <person name="Smith N.H."/>
        </authorList>
    </citation>
    <scope>NUCLEOTIDE SEQUENCE [GENOMIC DNA] OF 18-254</scope>
    <source>
        <strain>CCUG 18031</strain>
        <strain>CCUG 24845 / N6817</strain>
        <strain>CCUG 24846 / N6665</strain>
        <strain>INS MA 3008</strain>
    </source>
</reference>
<feature type="chain" id="PRO_0000122782" description="Protein RecA">
    <location>
        <begin position="1" status="less than"/>
        <end position="274" status="greater than"/>
    </location>
</feature>
<feature type="binding site" evidence="1">
    <location>
        <begin position="43"/>
        <end position="50"/>
    </location>
    <ligand>
        <name>ATP</name>
        <dbReference type="ChEBI" id="CHEBI:30616"/>
    </ligand>
</feature>
<feature type="non-terminal residue">
    <location>
        <position position="1"/>
    </location>
</feature>
<feature type="non-terminal residue">
    <location>
        <position position="274"/>
    </location>
</feature>
<gene>
    <name evidence="1" type="primary">recA</name>
</gene>
<sequence>AIMKMDGSQQEENLEVISTGSLGLDLALGVGGLPRGRIVEIFGPESSGKTTLCLEAVAQCQKNGGVCAFVDAEHAFDPVYARKLGVKVEELYLSQPDTGEQALEICDTLVRSGGIDMVVVDSVAALVPKAEIEGDMGDSHVGLQARLMSQALRKLTGHIKKTNTLVVFINQIRMKIGVMFGSPETTTGGNALKFYSSVRLDIRRTGSIKKGEEVLGNETRVKVIKNKVAPPFRQAEFDILYGEGISWEGELIDIGVKNDIINKSGAWYSYNGAK</sequence>
<evidence type="ECO:0000255" key="1">
    <source>
        <dbReference type="HAMAP-Rule" id="MF_00268"/>
    </source>
</evidence>
<organism>
    <name type="scientific">Neisseria polysaccharea</name>
    <dbReference type="NCBI Taxonomy" id="489"/>
    <lineage>
        <taxon>Bacteria</taxon>
        <taxon>Pseudomonadati</taxon>
        <taxon>Pseudomonadota</taxon>
        <taxon>Betaproteobacteria</taxon>
        <taxon>Neisseriales</taxon>
        <taxon>Neisseriaceae</taxon>
        <taxon>Neisseria</taxon>
    </lineage>
</organism>
<accession>P96955</accession>
<accession>P96952</accession>
<accession>P96953</accession>
<accession>P96954</accession>
<name>RECA_NEIPO</name>